<accession>A8WXS4</accession>
<protein>
    <recommendedName>
        <fullName evidence="2">Membrane-bound acylglycerophosphatidylinositol O-acyltransferase mboa-7</fullName>
        <ecNumber>2.3.1.-</ecNumber>
    </recommendedName>
    <alternativeName>
        <fullName evidence="1">1-acylglycerophosphatidylinositol O-acyltransferase</fullName>
        <ecNumber>2.3.1.n4</ecNumber>
    </alternativeName>
    <alternativeName>
        <fullName evidence="1">Lysophosphatidylinositol acyltransferase</fullName>
        <shortName evidence="1">LPIAT</shortName>
        <shortName evidence="1">Lyso-PI acyltransferase</shortName>
    </alternativeName>
    <alternativeName>
        <fullName evidence="1">Lysophospholipid acyltransferase 7</fullName>
        <shortName evidence="1">LPLAT 7</shortName>
    </alternativeName>
    <alternativeName>
        <fullName evidence="1">Membrane-bound O-acyltransferase domain-containing protein 7</fullName>
    </alternativeName>
</protein>
<dbReference type="EC" id="2.3.1.-"/>
<dbReference type="EC" id="2.3.1.n4"/>
<dbReference type="EMBL" id="HE601277">
    <property type="protein sequence ID" value="CAP25198.1"/>
    <property type="molecule type" value="Genomic_DNA"/>
</dbReference>
<dbReference type="SMR" id="A8WXS4"/>
<dbReference type="FunCoup" id="A8WXS4">
    <property type="interactions" value="2271"/>
</dbReference>
<dbReference type="STRING" id="6238.A8WXS4"/>
<dbReference type="GlyCosmos" id="A8WXS4">
    <property type="glycosylation" value="3 sites, No reported glycans"/>
</dbReference>
<dbReference type="EnsemblMetazoa" id="CBG04485.1">
    <property type="protein sequence ID" value="CBG04485.1"/>
    <property type="gene ID" value="WBGene00027148"/>
</dbReference>
<dbReference type="KEGG" id="cbr:CBG_04485"/>
<dbReference type="CTD" id="8586122"/>
<dbReference type="WormBase" id="CBG04485">
    <property type="protein sequence ID" value="CBP15085"/>
    <property type="gene ID" value="WBGene00027148"/>
    <property type="gene designation" value="Cbr-mboa-7"/>
</dbReference>
<dbReference type="eggNOG" id="KOG2706">
    <property type="taxonomic scope" value="Eukaryota"/>
</dbReference>
<dbReference type="HOGENOM" id="CLU_011340_1_1_1"/>
<dbReference type="InParanoid" id="A8WXS4"/>
<dbReference type="OMA" id="MMMPVFA"/>
<dbReference type="UniPathway" id="UPA00085"/>
<dbReference type="Proteomes" id="UP000008549">
    <property type="component" value="Unassembled WGS sequence"/>
</dbReference>
<dbReference type="GO" id="GO:0043231">
    <property type="term" value="C:intracellular membrane-bounded organelle"/>
    <property type="evidence" value="ECO:0007669"/>
    <property type="project" value="EnsemblMetazoa"/>
</dbReference>
<dbReference type="GO" id="GO:0016020">
    <property type="term" value="C:membrane"/>
    <property type="evidence" value="ECO:0000318"/>
    <property type="project" value="GO_Central"/>
</dbReference>
<dbReference type="GO" id="GO:0044233">
    <property type="term" value="C:mitochondria-associated endoplasmic reticulum membrane contact site"/>
    <property type="evidence" value="ECO:0000318"/>
    <property type="project" value="GO_Central"/>
</dbReference>
<dbReference type="GO" id="GO:0071617">
    <property type="term" value="F:lysophospholipid acyltransferase activity"/>
    <property type="evidence" value="ECO:0000318"/>
    <property type="project" value="GO_Central"/>
</dbReference>
<dbReference type="GO" id="GO:0008374">
    <property type="term" value="F:O-acyltransferase activity"/>
    <property type="evidence" value="ECO:0007669"/>
    <property type="project" value="EnsemblMetazoa"/>
</dbReference>
<dbReference type="GO" id="GO:0018991">
    <property type="term" value="P:egg-laying behavior"/>
    <property type="evidence" value="ECO:0007669"/>
    <property type="project" value="EnsemblMetazoa"/>
</dbReference>
<dbReference type="GO" id="GO:0030258">
    <property type="term" value="P:lipid modification"/>
    <property type="evidence" value="ECO:0000318"/>
    <property type="project" value="GO_Central"/>
</dbReference>
<dbReference type="GO" id="GO:0035264">
    <property type="term" value="P:multicellular organism growth"/>
    <property type="evidence" value="ECO:0007669"/>
    <property type="project" value="EnsemblMetazoa"/>
</dbReference>
<dbReference type="GO" id="GO:0002119">
    <property type="term" value="P:nematode larval development"/>
    <property type="evidence" value="ECO:0007669"/>
    <property type="project" value="EnsemblMetazoa"/>
</dbReference>
<dbReference type="GO" id="GO:0006661">
    <property type="term" value="P:phosphatidylinositol biosynthetic process"/>
    <property type="evidence" value="ECO:0000318"/>
    <property type="project" value="GO_Central"/>
</dbReference>
<dbReference type="InterPro" id="IPR049941">
    <property type="entry name" value="LPLAT_7/PORCN-like"/>
</dbReference>
<dbReference type="InterPro" id="IPR004299">
    <property type="entry name" value="MBOAT_fam"/>
</dbReference>
<dbReference type="PANTHER" id="PTHR13906:SF16">
    <property type="entry name" value="LYSOPHOSPHOLIPID ACYLTRANSFERASE 7"/>
    <property type="match status" value="1"/>
</dbReference>
<dbReference type="PANTHER" id="PTHR13906">
    <property type="entry name" value="PORCUPINE"/>
    <property type="match status" value="1"/>
</dbReference>
<dbReference type="Pfam" id="PF03062">
    <property type="entry name" value="MBOAT"/>
    <property type="match status" value="1"/>
</dbReference>
<keyword id="KW-0012">Acyltransferase</keyword>
<keyword id="KW-0325">Glycoprotein</keyword>
<keyword id="KW-0444">Lipid biosynthesis</keyword>
<keyword id="KW-0443">Lipid metabolism</keyword>
<keyword id="KW-0472">Membrane</keyword>
<keyword id="KW-0594">Phospholipid biosynthesis</keyword>
<keyword id="KW-1208">Phospholipid metabolism</keyword>
<keyword id="KW-1185">Reference proteome</keyword>
<keyword id="KW-0808">Transferase</keyword>
<keyword id="KW-0812">Transmembrane</keyword>
<keyword id="KW-1133">Transmembrane helix</keyword>
<comment type="function">
    <text evidence="1">Acyltransferase which mediates the conversion of lysophosphatidylinositol (1-acylglycerophosphatidylinositol or LPI) into phosphatidylinositol (1,2-diacyl-sn-glycero-3-phosphoinositol or PI) (LPIAT activity). Prefers arachidonoyl-CoA or eicosapentaenoic acid (EPA) as the acyl donor. Prefers sn-2-LPI rather than sn-1-LPI as the acyl acceptor. Lysophospholipid acyltransferases (LPLATs) catalyze the reacylation step of the phospholipid remodeling pathway also known as the Lands cycle (By similarity).</text>
</comment>
<comment type="catalytic activity">
    <reaction evidence="1">
        <text>a 1-acyl-sn-glycero-3-phospho-(1D-myo-inositol) + an acyl-CoA = a 1,2-diacyl-sn-glycero-3-phospho-(1D-myo-inositol) + CoA</text>
        <dbReference type="Rhea" id="RHEA:33195"/>
        <dbReference type="ChEBI" id="CHEBI:57287"/>
        <dbReference type="ChEBI" id="CHEBI:57880"/>
        <dbReference type="ChEBI" id="CHEBI:58342"/>
        <dbReference type="ChEBI" id="CHEBI:64771"/>
    </reaction>
</comment>
<comment type="catalytic activity">
    <reaction>
        <text>a fatty acyl-[ACP] + a 1-acyl-sn-glycero-3-phosphate = a 1,2-diacyl-sn-glycero-3-phosphate + holo-[ACP]</text>
        <dbReference type="Rhea" id="RHEA:42296"/>
        <dbReference type="Rhea" id="RHEA-COMP:9685"/>
        <dbReference type="Rhea" id="RHEA-COMP:14125"/>
        <dbReference type="ChEBI" id="CHEBI:57970"/>
        <dbReference type="ChEBI" id="CHEBI:58608"/>
        <dbReference type="ChEBI" id="CHEBI:64479"/>
        <dbReference type="ChEBI" id="CHEBI:138651"/>
        <dbReference type="EC" id="2.3.1.n4"/>
    </reaction>
</comment>
<comment type="pathway">
    <text evidence="1">Lipid metabolism; phospholipid metabolism.</text>
</comment>
<comment type="subcellular location">
    <subcellularLocation>
        <location evidence="3">Membrane</location>
        <topology evidence="3">Multi-pass membrane protein</topology>
    </subcellularLocation>
</comment>
<comment type="similarity">
    <text evidence="3">Belongs to the membrane-bound acyltransferase family.</text>
</comment>
<name>MBOA7_CAEBR</name>
<proteinExistence type="inferred from homology"/>
<feature type="chain" id="PRO_0000393936" description="Membrane-bound acylglycerophosphatidylinositol O-acyltransferase mboa-7">
    <location>
        <begin position="1"/>
        <end position="452"/>
    </location>
</feature>
<feature type="transmembrane region" description="Helical" evidence="3">
    <location>
        <begin position="4"/>
        <end position="24"/>
    </location>
</feature>
<feature type="transmembrane region" description="Helical" evidence="3">
    <location>
        <begin position="53"/>
        <end position="73"/>
    </location>
</feature>
<feature type="transmembrane region" description="Helical" evidence="3">
    <location>
        <begin position="79"/>
        <end position="99"/>
    </location>
</feature>
<feature type="transmembrane region" description="Helical" evidence="3">
    <location>
        <begin position="104"/>
        <end position="124"/>
    </location>
</feature>
<feature type="transmembrane region" description="Helical" evidence="3">
    <location>
        <begin position="153"/>
        <end position="173"/>
    </location>
</feature>
<feature type="transmembrane region" description="Helical" evidence="3">
    <location>
        <begin position="220"/>
        <end position="240"/>
    </location>
</feature>
<feature type="transmembrane region" description="Helical" evidence="3">
    <location>
        <begin position="244"/>
        <end position="264"/>
    </location>
</feature>
<feature type="transmembrane region" description="Helical" evidence="3">
    <location>
        <begin position="354"/>
        <end position="374"/>
    </location>
</feature>
<feature type="transmembrane region" description="Helical" evidence="3">
    <location>
        <begin position="421"/>
        <end position="441"/>
    </location>
</feature>
<feature type="active site" evidence="1">
    <location>
        <position position="350"/>
    </location>
</feature>
<feature type="glycosylation site" description="N-linked (GlcNAc...) asparagine" evidence="3">
    <location>
        <position position="137"/>
    </location>
</feature>
<feature type="glycosylation site" description="N-linked (GlcNAc...) asparagine" evidence="3">
    <location>
        <position position="319"/>
    </location>
</feature>
<feature type="glycosylation site" description="N-linked (GlcNAc...) asparagine" evidence="3">
    <location>
        <position position="414"/>
    </location>
</feature>
<reference evidence="4" key="1">
    <citation type="journal article" date="2003" name="PLoS Biol.">
        <title>The genome sequence of Caenorhabditis briggsae: a platform for comparative genomics.</title>
        <authorList>
            <person name="Stein L.D."/>
            <person name="Bao Z."/>
            <person name="Blasiar D."/>
            <person name="Blumenthal T."/>
            <person name="Brent M.R."/>
            <person name="Chen N."/>
            <person name="Chinwalla A."/>
            <person name="Clarke L."/>
            <person name="Clee C."/>
            <person name="Coghlan A."/>
            <person name="Coulson A."/>
            <person name="D'Eustachio P."/>
            <person name="Fitch D.H.A."/>
            <person name="Fulton L.A."/>
            <person name="Fulton R.E."/>
            <person name="Griffiths-Jones S."/>
            <person name="Harris T.W."/>
            <person name="Hillier L.W."/>
            <person name="Kamath R."/>
            <person name="Kuwabara P.E."/>
            <person name="Mardis E.R."/>
            <person name="Marra M.A."/>
            <person name="Miner T.L."/>
            <person name="Minx P."/>
            <person name="Mullikin J.C."/>
            <person name="Plumb R.W."/>
            <person name="Rogers J."/>
            <person name="Schein J.E."/>
            <person name="Sohrmann M."/>
            <person name="Spieth J."/>
            <person name="Stajich J.E."/>
            <person name="Wei C."/>
            <person name="Willey D."/>
            <person name="Wilson R.K."/>
            <person name="Durbin R.M."/>
            <person name="Waterston R.H."/>
        </authorList>
    </citation>
    <scope>NUCLEOTIDE SEQUENCE [LARGE SCALE GENOMIC DNA]</scope>
    <source>
        <strain>AF16</strain>
    </source>
</reference>
<organism>
    <name type="scientific">Caenorhabditis briggsae</name>
    <dbReference type="NCBI Taxonomy" id="6238"/>
    <lineage>
        <taxon>Eukaryota</taxon>
        <taxon>Metazoa</taxon>
        <taxon>Ecdysozoa</taxon>
        <taxon>Nematoda</taxon>
        <taxon>Chromadorea</taxon>
        <taxon>Rhabditida</taxon>
        <taxon>Rhabditina</taxon>
        <taxon>Rhabditomorpha</taxon>
        <taxon>Rhabditoidea</taxon>
        <taxon>Rhabditidae</taxon>
        <taxon>Peloderinae</taxon>
        <taxon>Caenorhabditis</taxon>
    </lineage>
</organism>
<sequence length="452" mass="51714">MEKIIGLMSRDDWVYTGLLLFSFAASCYVRKLGNNILASGALGFAMALFIIGPRIAYSLGICAIAVGIQAFAPKKKVPFYVFLTTFTYLMFVRFAHYFLPVVEVASHTNVIQLIITLRIIGITFEENDAWLHKNDENATKRYLTRMPTLLEKFAYFYHFCGLFTGPYYTYQMLLDSQNPALQSWDPTPEVTSRFVRLLWSVPAFVITNHYFPLDSLRSDAIWEVSFFTRLVYAALIFVVFKTRVYSAWAIAESICVILGIGIYPAASNPKIIVGPTDLKVFEGLRDKENVEMNSDAIVNLDIPKVEFSDGFRDGMKAWNRSVQTWLALYVHSRVKFMRVETTMLVSAIWHGTYAGYFMSFGVVAMCAILEDVIFKLVPVNPETGLRPQWFRILYTHTIRCRGFEMLATGFLLKNASDVHHFWSSIYYWLPLLCVPFYIYSVKTAAPKLKLVV</sequence>
<gene>
    <name evidence="4" type="primary">mboa-7</name>
    <name type="ORF">CBG04485</name>
</gene>
<evidence type="ECO:0000250" key="1">
    <source>
        <dbReference type="UniProtKB" id="Q19468"/>
    </source>
</evidence>
<evidence type="ECO:0000250" key="2">
    <source>
        <dbReference type="UniProtKB" id="Q96N66"/>
    </source>
</evidence>
<evidence type="ECO:0000255" key="3"/>
<evidence type="ECO:0000312" key="4">
    <source>
        <dbReference type="EMBL" id="CAP25198.1"/>
    </source>
</evidence>